<proteinExistence type="evidence at protein level"/>
<dbReference type="EC" id="5.5.1.12" evidence="5 6"/>
<dbReference type="EMBL" id="KU180499">
    <property type="protein sequence ID" value="APJ36371.1"/>
    <property type="molecule type" value="mRNA"/>
</dbReference>
<dbReference type="EMBL" id="KX831651">
    <property type="protein sequence ID" value="ARO38141.1"/>
    <property type="molecule type" value="mRNA"/>
</dbReference>
<dbReference type="EMBL" id="MK344324">
    <property type="protein sequence ID" value="QDQ03535.1"/>
    <property type="molecule type" value="Genomic_DNA"/>
</dbReference>
<dbReference type="SMR" id="A0A1X9IRQ7"/>
<dbReference type="UniPathway" id="UPA00213"/>
<dbReference type="GO" id="GO:0009507">
    <property type="term" value="C:chloroplast"/>
    <property type="evidence" value="ECO:0007669"/>
    <property type="project" value="UniProtKB-SubCell"/>
</dbReference>
<dbReference type="GO" id="GO:0050559">
    <property type="term" value="F:copalyl diphosphate synthase activity"/>
    <property type="evidence" value="ECO:0000314"/>
    <property type="project" value="UniProtKB"/>
</dbReference>
<dbReference type="GO" id="GO:0000287">
    <property type="term" value="F:magnesium ion binding"/>
    <property type="evidence" value="ECO:0007669"/>
    <property type="project" value="TreeGrafter"/>
</dbReference>
<dbReference type="GO" id="GO:0010333">
    <property type="term" value="F:terpene synthase activity"/>
    <property type="evidence" value="ECO:0007669"/>
    <property type="project" value="InterPro"/>
</dbReference>
<dbReference type="GO" id="GO:0009686">
    <property type="term" value="P:gibberellin biosynthetic process"/>
    <property type="evidence" value="ECO:0007669"/>
    <property type="project" value="TreeGrafter"/>
</dbReference>
<dbReference type="GO" id="GO:1901946">
    <property type="term" value="P:miltiradiene biosynthetic process"/>
    <property type="evidence" value="ECO:0000314"/>
    <property type="project" value="UniProtKB"/>
</dbReference>
<dbReference type="GO" id="GO:0016114">
    <property type="term" value="P:terpenoid biosynthetic process"/>
    <property type="evidence" value="ECO:0000314"/>
    <property type="project" value="UniProtKB"/>
</dbReference>
<dbReference type="FunFam" id="1.50.10.130:FF:000002">
    <property type="entry name" value="Ent-copalyl diphosphate synthase, chloroplastic"/>
    <property type="match status" value="1"/>
</dbReference>
<dbReference type="Gene3D" id="1.50.10.160">
    <property type="match status" value="1"/>
</dbReference>
<dbReference type="Gene3D" id="1.10.600.10">
    <property type="entry name" value="Farnesyl Diphosphate Synthase"/>
    <property type="match status" value="1"/>
</dbReference>
<dbReference type="Gene3D" id="1.50.10.130">
    <property type="entry name" value="Terpene synthase, N-terminal domain"/>
    <property type="match status" value="1"/>
</dbReference>
<dbReference type="InterPro" id="IPR008949">
    <property type="entry name" value="Isoprenoid_synthase_dom_sf"/>
</dbReference>
<dbReference type="InterPro" id="IPR001906">
    <property type="entry name" value="Terpene_synth_N"/>
</dbReference>
<dbReference type="InterPro" id="IPR036965">
    <property type="entry name" value="Terpene_synth_N_sf"/>
</dbReference>
<dbReference type="InterPro" id="IPR050148">
    <property type="entry name" value="Terpene_synthase-like"/>
</dbReference>
<dbReference type="InterPro" id="IPR008930">
    <property type="entry name" value="Terpenoid_cyclase/PrenylTrfase"/>
</dbReference>
<dbReference type="PANTHER" id="PTHR31739:SF30">
    <property type="entry name" value="COPAL-8-OL DIPHOSPHATE HYDRATASE, CHLOROPLASTIC"/>
    <property type="match status" value="1"/>
</dbReference>
<dbReference type="PANTHER" id="PTHR31739">
    <property type="entry name" value="ENT-COPALYL DIPHOSPHATE SYNTHASE, CHLOROPLASTIC"/>
    <property type="match status" value="1"/>
</dbReference>
<dbReference type="Pfam" id="PF01397">
    <property type="entry name" value="Terpene_synth"/>
    <property type="match status" value="1"/>
</dbReference>
<dbReference type="SFLD" id="SFLDG01014">
    <property type="entry name" value="Terpene_Cyclase_Like_1_N-term"/>
    <property type="match status" value="1"/>
</dbReference>
<dbReference type="SFLD" id="SFLDG01605">
    <property type="entry name" value="Terpene_Cyclase_Like_1_N-term"/>
    <property type="match status" value="1"/>
</dbReference>
<dbReference type="SUPFAM" id="SSF48239">
    <property type="entry name" value="Terpenoid cyclases/Protein prenyltransferases"/>
    <property type="match status" value="2"/>
</dbReference>
<dbReference type="SUPFAM" id="SSF48576">
    <property type="entry name" value="Terpenoid synthases"/>
    <property type="match status" value="1"/>
</dbReference>
<evidence type="ECO:0000250" key="1">
    <source>
        <dbReference type="UniProtKB" id="C7BKP9"/>
    </source>
</evidence>
<evidence type="ECO:0000250" key="2">
    <source>
        <dbReference type="UniProtKB" id="Q38802"/>
    </source>
</evidence>
<evidence type="ECO:0000250" key="3">
    <source>
        <dbReference type="UniProtKB" id="Q40577"/>
    </source>
</evidence>
<evidence type="ECO:0000255" key="4"/>
<evidence type="ECO:0000269" key="5">
    <source>
    </source>
</evidence>
<evidence type="ECO:0000269" key="6">
    <source>
    </source>
</evidence>
<evidence type="ECO:0000303" key="7">
    <source>
    </source>
</evidence>
<evidence type="ECO:0000303" key="8">
    <source>
    </source>
</evidence>
<evidence type="ECO:0000303" key="9">
    <source ref="3"/>
</evidence>
<evidence type="ECO:0000305" key="10"/>
<gene>
    <name evidence="7" type="primary">CPS1</name>
    <name evidence="8" type="synonym">TPS3</name>
</gene>
<accession>A0A1X9IRQ7</accession>
<accession>A0A1W6QDI2</accession>
<accession>A0A516QJE3</accession>
<keyword id="KW-0150">Chloroplast</keyword>
<keyword id="KW-0413">Isomerase</keyword>
<keyword id="KW-0460">Magnesium</keyword>
<keyword id="KW-0479">Metal-binding</keyword>
<keyword id="KW-0934">Plastid</keyword>
<keyword id="KW-0809">Transit peptide</keyword>
<feature type="transit peptide" description="Chloroplast" evidence="4">
    <location>
        <begin position="1"/>
        <end position="72"/>
    </location>
</feature>
<feature type="chain" id="PRO_0000452372" description="Copalyl diphosphate synthase 1, chloroplastic">
    <location>
        <begin position="73"/>
        <end position="798"/>
    </location>
</feature>
<feature type="short sequence motif" description="DXDD motif" evidence="10">
    <location>
        <begin position="383"/>
        <end position="386"/>
    </location>
</feature>
<feature type="binding site" evidence="2">
    <location>
        <position position="251"/>
    </location>
    <ligand>
        <name>substrate</name>
    </ligand>
</feature>
<feature type="binding site" evidence="1">
    <location>
        <position position="383"/>
    </location>
    <ligand>
        <name>Mg(2+)</name>
        <dbReference type="ChEBI" id="CHEBI:18420"/>
    </ligand>
</feature>
<feature type="binding site" evidence="1">
    <location>
        <position position="385"/>
    </location>
    <ligand>
        <name>Mg(2+)</name>
        <dbReference type="ChEBI" id="CHEBI:18420"/>
    </ligand>
</feature>
<feature type="binding site" evidence="2">
    <location>
        <position position="469"/>
    </location>
    <ligand>
        <name>substrate</name>
    </ligand>
</feature>
<feature type="sequence conflict" description="In Ref. 3; QDQ03535." evidence="10" ref="3">
    <original>H</original>
    <variation>P</variation>
    <location>
        <position position="8"/>
    </location>
</feature>
<feature type="sequence conflict" description="In Ref. 3; QDQ03535." evidence="10" ref="3">
    <location>
        <begin position="23"/>
        <end position="25"/>
    </location>
</feature>
<feature type="sequence conflict" description="In Ref. 1; APJ36371." evidence="10" ref="1">
    <location>
        <begin position="23"/>
        <end position="24"/>
    </location>
</feature>
<feature type="sequence conflict" description="In Ref. 1; APJ36371." evidence="10" ref="1">
    <original>L</original>
    <variation>M</variation>
    <location>
        <position position="33"/>
    </location>
</feature>
<feature type="sequence conflict" description="In Ref. 1; APJ36371." evidence="10" ref="1">
    <original>T</original>
    <variation>M</variation>
    <location>
        <position position="111"/>
    </location>
</feature>
<feature type="sequence conflict" description="In Ref. 1; APJ36371." evidence="10" ref="1">
    <original>E</original>
    <variation>Q</variation>
    <location>
        <position position="139"/>
    </location>
</feature>
<feature type="sequence conflict" description="In Ref. 2; ARO38141." evidence="10" ref="2">
    <original>E</original>
    <variation>Q</variation>
    <location>
        <position position="232"/>
    </location>
</feature>
<feature type="sequence conflict" description="In Ref. 2; ARO38141." evidence="10" ref="2">
    <original>SRQ</original>
    <variation>TRE</variation>
    <location>
        <begin position="247"/>
        <end position="249"/>
    </location>
</feature>
<feature type="sequence conflict" description="In Ref. 3; QDQ03535." evidence="10" ref="3">
    <original>R</original>
    <variation>S</variation>
    <location>
        <position position="498"/>
    </location>
</feature>
<feature type="sequence conflict" description="In Ref. 3; QDQ03535." evidence="10" ref="3">
    <original>N</original>
    <variation>S</variation>
    <location>
        <position position="607"/>
    </location>
</feature>
<feature type="sequence conflict" description="In Ref. 2; ARO38141." evidence="10" ref="2">
    <original>V</original>
    <variation>F</variation>
    <location>
        <position position="797"/>
    </location>
</feature>
<sequence length="798" mass="91716">MASLSTMHLINHSPASRRRIMSAAAAAAAKLHLPECFTITKSAWMNNTENLTLNYQLNHKKISKVAGINRVATVDAPQVHDQDDSTENQGHDAVNNIEDPIEYIRTLLRTTGDGRISVSPYDTAWVALIKDLNGRDAPEFPSSLEWIVRNQLDDGSWGDDKFFCVYDRLVNTIACVVALRSWNVHDDKLKRGVTYIKENVEKLRDGNVEHMTCGFEVVFTALLQRAKCLGIEDLPYDSPLIQEIYHSRQQKLNRIPMEMMHKVPTSLLFSLEGLENLEWERLLKLQSADGSFLTSPSSTAFAFMQTKDEKCYQFIKNTVETFNGGAPHTYPVDVFGRLWAVDRLQRLGISRFFESEIAECLAHIHKFWTEKGVFSGRESEFCDIDDTSMGIRLLRMHGYDVDPNVLRNFKKDDNFSCYGGQMIESPSPIYNLYRASQLRFPGEEILEDANKFAYNFLQEKLANNQILDKWVISKHLPDEIKLGMEMPWYATLPRVEARYYLQYYAGSGDVWIGKTLYRMPEISNDTYHELAKTDFKRCQAQHQFEWIYMQEWYESCNVEEFGISRKELLLAYFLATASIFELEKTKERIAWAKSQIISKMITSFFNNHNTSSEEKLAFLTDFRNSNGLNNTNMVLATLTQFLEGFNRYTSHQLKNAWGEWLAKLQQGEGDGAADAELLTNTLNICAGHIAFREEILSHNEYTTLSNLTSKICQQLSQIQNEKKMEIEGQMTAETSIKNKELEQDMQTLVKLVLGKSSGINRNIKKTFLAVAKTYYYRAYHDAQTIDTHMFKVLFEPVV</sequence>
<name>CPS1_ISORU</name>
<organism>
    <name type="scientific">Isodon rubescens</name>
    <name type="common">Rabdosia rubescens</name>
    <dbReference type="NCBI Taxonomy" id="587669"/>
    <lineage>
        <taxon>Eukaryota</taxon>
        <taxon>Viridiplantae</taxon>
        <taxon>Streptophyta</taxon>
        <taxon>Embryophyta</taxon>
        <taxon>Tracheophyta</taxon>
        <taxon>Spermatophyta</taxon>
        <taxon>Magnoliopsida</taxon>
        <taxon>eudicotyledons</taxon>
        <taxon>Gunneridae</taxon>
        <taxon>Pentapetalae</taxon>
        <taxon>asterids</taxon>
        <taxon>lamiids</taxon>
        <taxon>Lamiales</taxon>
        <taxon>Lamiaceae</taxon>
        <taxon>Nepetoideae</taxon>
        <taxon>Ocimeae</taxon>
        <taxon>Isodoninae</taxon>
        <taxon>Isodon</taxon>
    </lineage>
</organism>
<protein>
    <recommendedName>
        <fullName evidence="7 8 9">Copalyl diphosphate synthase 1, chloroplastic</fullName>
        <shortName evidence="7">IrCPS1</shortName>
        <ecNumber evidence="5 6">5.5.1.12</ecNumber>
    </recommendedName>
    <alternativeName>
        <fullName evidence="8">Terpene synthase 3</fullName>
        <shortName evidence="8">IrTPS3</shortName>
    </alternativeName>
</protein>
<reference key="1">
    <citation type="journal article" date="2017" name="Plant Physiol.">
        <title>Functional diversification of kaurene synthase-like genes in Isodon rubescens.</title>
        <authorList>
            <person name="Jin B."/>
            <person name="Cui G."/>
            <person name="Guo J."/>
            <person name="Tang J."/>
            <person name="Duan L."/>
            <person name="Lin H."/>
            <person name="Shen Y."/>
            <person name="Chen T."/>
            <person name="Zhang H."/>
            <person name="Huang L."/>
        </authorList>
    </citation>
    <scope>NUCLEOTIDE SEQUENCE [MRNA]</scope>
    <scope>FUNCTION</scope>
    <scope>PATHWAY</scope>
    <scope>CATALYTIC ACTIVITY</scope>
    <scope>TISSUE SPECIFICITY</scope>
</reference>
<reference key="2">
    <citation type="journal article" date="2017" name="PLoS ONE">
        <title>Biosynthesis of the oxygenated diterpene nezukol in the medicinal plant Isodon rubescens is catalyzed by a pair of diterpene synthases.</title>
        <authorList>
            <person name="Pelot K.A."/>
            <person name="Hagelthorn L.M."/>
            <person name="Addison J.B."/>
            <person name="Zerbe P."/>
        </authorList>
    </citation>
    <scope>NUCLEOTIDE SEQUENCE [MRNA]</scope>
    <scope>FUNCTION</scope>
    <scope>PATHWAY</scope>
    <scope>CATALYTIC ACTIVITY</scope>
    <scope>TISSUE SPECIFICITY</scope>
</reference>
<reference key="3">
    <citation type="submission" date="2018-12" db="EMBL/GenBank/DDBJ databases">
        <authorList>
            <person name="Liu X."/>
        </authorList>
    </citation>
    <scope>NUCLEOTIDE SEQUENCE [GENOMIC DNA]</scope>
</reference>
<comment type="function">
    <text evidence="5">Involved in the biosynthesis of ent-kaurene diterpenoids natural products such as oridonin, miltiradiene, eriocalyxin B and nezukol, known to exhibit antitumor, anti-inflammatory and antibacterial activities (PubMed:28381502). Catalyzes the conversion of (2E,6E,10E)-geranylgeranyl diphosphate (GGPP) to (+)-copalyl diphosphate ((+)-CPP) (PubMed:28381502).</text>
</comment>
<comment type="catalytic activity">
    <reaction evidence="5 6">
        <text>(2E,6E,10E)-geranylgeranyl diphosphate = (+)-copalyl diphosphate</text>
        <dbReference type="Rhea" id="RHEA:24316"/>
        <dbReference type="ChEBI" id="CHEBI:58635"/>
        <dbReference type="ChEBI" id="CHEBI:58756"/>
        <dbReference type="EC" id="5.5.1.12"/>
    </reaction>
    <physiologicalReaction direction="left-to-right" evidence="5 6">
        <dbReference type="Rhea" id="RHEA:24317"/>
    </physiologicalReaction>
</comment>
<comment type="cofactor">
    <cofactor evidence="3">
        <name>Mg(2+)</name>
        <dbReference type="ChEBI" id="CHEBI:18420"/>
    </cofactor>
</comment>
<comment type="pathway">
    <text evidence="5 6">Secondary metabolite biosynthesis; terpenoid biosynthesis.</text>
</comment>
<comment type="subcellular location">
    <subcellularLocation>
        <location evidence="4">Plastid</location>
        <location evidence="4">Chloroplast</location>
    </subcellularLocation>
</comment>
<comment type="tissue specificity">
    <text evidence="5 6">Highly expressed in roots, and, at low levels, in stems and leaves.</text>
</comment>
<comment type="domain">
    <text evidence="10">The Asp-Xaa-Asp-Asp (DXDD) motif is important for the catalytic activity, presumably through binding to Mg(2+).</text>
</comment>
<comment type="miscellaneous">
    <text evidence="5">Abietane diterpenoids (e.g. miltiradiene, abietatriene and ferruginol) accumulate specifically in the periderm of roots (PubMed:28381502). The ent-kaurene diterpenoid oridonin, main constituent of Isodon rubescens, accumulates in leaves (PubMed:28381502).</text>
</comment>
<comment type="similarity">
    <text evidence="10">Belongs to the terpene synthase family. Tpsc subfamily.</text>
</comment>